<sequence length="225" mass="24218">MRVRRLVMLRHGQTEYNAGSRMQGQLDTDLSDLGREQAVAAAEVLAKRQPLLIVSSDLRRALDTAVALGDRSGQPVSIDTRLRETHLGDWQGMTHLEVDAAAPGARLAWRDDARWAPHGGESRVDVADRSLPLVHELVTQQTDWGAAGSDRPVVLVAHGGLIAALTAALLGLPVDNWPVLGGMGNASWVQLAGHTRADGDPGAFADIRWRLDVWNASAQVANDVL</sequence>
<organism>
    <name type="scientific">Mycolicibacterium vanbaalenii (strain DSM 7251 / JCM 13017 / BCRC 16820 / KCTC 9966 / NRRL B-24157 / PYR-1)</name>
    <name type="common">Mycobacterium vanbaalenii</name>
    <dbReference type="NCBI Taxonomy" id="350058"/>
    <lineage>
        <taxon>Bacteria</taxon>
        <taxon>Bacillati</taxon>
        <taxon>Actinomycetota</taxon>
        <taxon>Actinomycetes</taxon>
        <taxon>Mycobacteriales</taxon>
        <taxon>Mycobacteriaceae</taxon>
        <taxon>Mycolicibacterium</taxon>
    </lineage>
</organism>
<protein>
    <recommendedName>
        <fullName evidence="3">Glucosyl-3-phosphoglycerate phosphatase</fullName>
        <ecNumber evidence="2">3.1.3.85</ecNumber>
    </recommendedName>
</protein>
<gene>
    <name evidence="3" type="primary">gpgP</name>
    <name type="ordered locus">Mvan_3924</name>
</gene>
<keyword id="KW-0378">Hydrolase</keyword>
<accession>A1TC01</accession>
<reference key="1">
    <citation type="submission" date="2006-12" db="EMBL/GenBank/DDBJ databases">
        <title>Complete sequence of Mycobacterium vanbaalenii PYR-1.</title>
        <authorList>
            <consortium name="US DOE Joint Genome Institute"/>
            <person name="Copeland A."/>
            <person name="Lucas S."/>
            <person name="Lapidus A."/>
            <person name="Barry K."/>
            <person name="Detter J.C."/>
            <person name="Glavina del Rio T."/>
            <person name="Hammon N."/>
            <person name="Israni S."/>
            <person name="Dalin E."/>
            <person name="Tice H."/>
            <person name="Pitluck S."/>
            <person name="Singan V."/>
            <person name="Schmutz J."/>
            <person name="Larimer F."/>
            <person name="Land M."/>
            <person name="Hauser L."/>
            <person name="Kyrpides N."/>
            <person name="Anderson I.J."/>
            <person name="Miller C."/>
            <person name="Richardson P."/>
        </authorList>
    </citation>
    <scope>NUCLEOTIDE SEQUENCE [LARGE SCALE GENOMIC DNA]</scope>
    <source>
        <strain>DSM 7251 / JCM 13017 / BCRC 16820 / KCTC 9966 / NRRL B-24157 / PYR-1</strain>
    </source>
</reference>
<reference key="2">
    <citation type="journal article" date="2011" name="Sci. Rep.">
        <title>Mycobacterium tuberculosis Rv2419c, the missing glucosyl-3-phosphoglycerate phosphatase for the second step in methylglucose lipopolysaccharide biosynthesis.</title>
        <authorList>
            <person name="Mendes V."/>
            <person name="Maranha A."/>
            <person name="Alarico S."/>
            <person name="da Costa M.S."/>
            <person name="Empadinhas N."/>
        </authorList>
    </citation>
    <scope>FUNCTION</scope>
    <scope>CATALYTIC ACTIVITY</scope>
    <source>
        <strain>DSM 7251 / JCM 13017 / BCRC 16820 / KCTC 9966 / NRRL B-24157 / PYR-1</strain>
    </source>
</reference>
<name>GPGP_MYCVP</name>
<proteinExistence type="evidence at protein level"/>
<feature type="chain" id="PRO_0000420160" description="Glucosyl-3-phosphoglycerate phosphatase">
    <location>
        <begin position="1"/>
        <end position="225"/>
    </location>
</feature>
<feature type="active site" description="Tele-phosphohistidine intermediate" evidence="1">
    <location>
        <position position="11"/>
    </location>
</feature>
<feature type="active site" description="Proton donor/acceptor" evidence="1">
    <location>
        <position position="84"/>
    </location>
</feature>
<feature type="binding site" evidence="1">
    <location>
        <position position="10"/>
    </location>
    <ligand>
        <name>substrate</name>
    </ligand>
</feature>
<feature type="binding site" evidence="1">
    <location>
        <position position="60"/>
    </location>
    <ligand>
        <name>substrate</name>
    </ligand>
</feature>
<feature type="binding site" evidence="1">
    <location>
        <position position="158"/>
    </location>
    <ligand>
        <name>substrate</name>
    </ligand>
</feature>
<dbReference type="EC" id="3.1.3.85" evidence="2"/>
<dbReference type="EMBL" id="CP000511">
    <property type="protein sequence ID" value="ABM14701.1"/>
    <property type="molecule type" value="Genomic_DNA"/>
</dbReference>
<dbReference type="RefSeq" id="WP_011781081.1">
    <property type="nucleotide sequence ID" value="NZ_JACKSD010000018.1"/>
</dbReference>
<dbReference type="SMR" id="A1TC01"/>
<dbReference type="STRING" id="350058.Mvan_3924"/>
<dbReference type="KEGG" id="mva:Mvan_3924"/>
<dbReference type="eggNOG" id="COG0406">
    <property type="taxonomic scope" value="Bacteria"/>
</dbReference>
<dbReference type="HOGENOM" id="CLU_033323_9_5_11"/>
<dbReference type="Proteomes" id="UP000009159">
    <property type="component" value="Chromosome"/>
</dbReference>
<dbReference type="GO" id="GO:0005737">
    <property type="term" value="C:cytoplasm"/>
    <property type="evidence" value="ECO:0007669"/>
    <property type="project" value="TreeGrafter"/>
</dbReference>
<dbReference type="GO" id="GO:0016791">
    <property type="term" value="F:phosphatase activity"/>
    <property type="evidence" value="ECO:0007669"/>
    <property type="project" value="TreeGrafter"/>
</dbReference>
<dbReference type="CDD" id="cd07067">
    <property type="entry name" value="HP_PGM_like"/>
    <property type="match status" value="1"/>
</dbReference>
<dbReference type="Gene3D" id="3.40.50.1240">
    <property type="entry name" value="Phosphoglycerate mutase-like"/>
    <property type="match status" value="1"/>
</dbReference>
<dbReference type="InterPro" id="IPR013078">
    <property type="entry name" value="His_Pase_superF_clade-1"/>
</dbReference>
<dbReference type="InterPro" id="IPR029033">
    <property type="entry name" value="His_PPase_superfam"/>
</dbReference>
<dbReference type="InterPro" id="IPR001345">
    <property type="entry name" value="PG/BPGM_mutase_AS"/>
</dbReference>
<dbReference type="InterPro" id="IPR050275">
    <property type="entry name" value="PGM_Phosphatase"/>
</dbReference>
<dbReference type="PANTHER" id="PTHR48100">
    <property type="entry name" value="BROAD-SPECIFICITY PHOSPHATASE YOR283W-RELATED"/>
    <property type="match status" value="1"/>
</dbReference>
<dbReference type="PANTHER" id="PTHR48100:SF62">
    <property type="entry name" value="GLUCOSYL-3-PHOSPHOGLYCERATE PHOSPHATASE"/>
    <property type="match status" value="1"/>
</dbReference>
<dbReference type="Pfam" id="PF00300">
    <property type="entry name" value="His_Phos_1"/>
    <property type="match status" value="1"/>
</dbReference>
<dbReference type="SMART" id="SM00855">
    <property type="entry name" value="PGAM"/>
    <property type="match status" value="1"/>
</dbReference>
<dbReference type="SUPFAM" id="SSF53254">
    <property type="entry name" value="Phosphoglycerate mutase-like"/>
    <property type="match status" value="1"/>
</dbReference>
<dbReference type="PROSITE" id="PS00175">
    <property type="entry name" value="PG_MUTASE"/>
    <property type="match status" value="1"/>
</dbReference>
<comment type="function">
    <text evidence="2">Involved in the biosynthesis of mycobacterial methylglucose lipopolysaccharides (MGLP). Catalyzes the dephosphorylation of glucosyl-3-phosphoglycerate (GPG) to glucosylglycerate.</text>
</comment>
<comment type="catalytic activity">
    <reaction evidence="2">
        <text>(2R)-2-O-(alpha-D-glucopyranosyl)-3-phospho-glycerate + H2O = (2R)-2-O-(alpha-D-glucopyranosyl)-glycerate + phosphate</text>
        <dbReference type="Rhea" id="RHEA:31343"/>
        <dbReference type="ChEBI" id="CHEBI:15377"/>
        <dbReference type="ChEBI" id="CHEBI:43474"/>
        <dbReference type="ChEBI" id="CHEBI:62510"/>
        <dbReference type="ChEBI" id="CHEBI:62600"/>
        <dbReference type="EC" id="3.1.3.85"/>
    </reaction>
</comment>
<comment type="subunit">
    <text evidence="1">Homodimer.</text>
</comment>
<comment type="similarity">
    <text evidence="4">Belongs to the phosphoglycerate mutase family.</text>
</comment>
<evidence type="ECO:0000250" key="1">
    <source>
        <dbReference type="UniProtKB" id="P9WIC7"/>
    </source>
</evidence>
<evidence type="ECO:0000269" key="2">
    <source>
    </source>
</evidence>
<evidence type="ECO:0000303" key="3">
    <source>
    </source>
</evidence>
<evidence type="ECO:0000305" key="4"/>